<evidence type="ECO:0000255" key="1">
    <source>
        <dbReference type="HAMAP-Rule" id="MF_01315"/>
    </source>
</evidence>
<evidence type="ECO:0000256" key="2">
    <source>
        <dbReference type="SAM" id="MobiDB-lite"/>
    </source>
</evidence>
<evidence type="ECO:0000305" key="3"/>
<proteinExistence type="inferred from homology"/>
<protein>
    <recommendedName>
        <fullName evidence="1">Small ribosomal subunit protein uS13</fullName>
    </recommendedName>
    <alternativeName>
        <fullName evidence="3">30S ribosomal protein S13</fullName>
    </alternativeName>
</protein>
<reference key="1">
    <citation type="journal article" date="2005" name="J. Bacteriol.">
        <title>Insights on evolution of virulence and resistance from the complete genome analysis of an early methicillin-resistant Staphylococcus aureus strain and a biofilm-producing methicillin-resistant Staphylococcus epidermidis strain.</title>
        <authorList>
            <person name="Gill S.R."/>
            <person name="Fouts D.E."/>
            <person name="Archer G.L."/>
            <person name="Mongodin E.F."/>
            <person name="DeBoy R.T."/>
            <person name="Ravel J."/>
            <person name="Paulsen I.T."/>
            <person name="Kolonay J.F."/>
            <person name="Brinkac L.M."/>
            <person name="Beanan M.J."/>
            <person name="Dodson R.J."/>
            <person name="Daugherty S.C."/>
            <person name="Madupu R."/>
            <person name="Angiuoli S.V."/>
            <person name="Durkin A.S."/>
            <person name="Haft D.H."/>
            <person name="Vamathevan J.J."/>
            <person name="Khouri H."/>
            <person name="Utterback T.R."/>
            <person name="Lee C."/>
            <person name="Dimitrov G."/>
            <person name="Jiang L."/>
            <person name="Qin H."/>
            <person name="Weidman J."/>
            <person name="Tran K."/>
            <person name="Kang K.H."/>
            <person name="Hance I.R."/>
            <person name="Nelson K.E."/>
            <person name="Fraser C.M."/>
        </authorList>
    </citation>
    <scope>NUCLEOTIDE SEQUENCE [LARGE SCALE GENOMIC DNA]</scope>
    <source>
        <strain>COL</strain>
    </source>
</reference>
<keyword id="KW-0687">Ribonucleoprotein</keyword>
<keyword id="KW-0689">Ribosomal protein</keyword>
<keyword id="KW-0694">RNA-binding</keyword>
<keyword id="KW-0699">rRNA-binding</keyword>
<keyword id="KW-0820">tRNA-binding</keyword>
<sequence>MARIAGVDIPREKRVVISLTYIYGIGTSTAQKILEEANVSADTRVKDLTDDELGRIREVVDGYKVEGDLRRETNLNIKRLMEISSYRGIRHRRGLPVRGQKTKNNARTRKGPVKTVANKKK</sequence>
<organism>
    <name type="scientific">Staphylococcus aureus (strain COL)</name>
    <dbReference type="NCBI Taxonomy" id="93062"/>
    <lineage>
        <taxon>Bacteria</taxon>
        <taxon>Bacillati</taxon>
        <taxon>Bacillota</taxon>
        <taxon>Bacilli</taxon>
        <taxon>Bacillales</taxon>
        <taxon>Staphylococcaceae</taxon>
        <taxon>Staphylococcus</taxon>
    </lineage>
</organism>
<gene>
    <name evidence="1" type="primary">rpsM</name>
    <name type="ordered locus">SACOL2215</name>
</gene>
<dbReference type="EMBL" id="CP000046">
    <property type="protein sequence ID" value="AAW37090.1"/>
    <property type="molecule type" value="Genomic_DNA"/>
</dbReference>
<dbReference type="RefSeq" id="WP_000090796.1">
    <property type="nucleotide sequence ID" value="NZ_JBGOFO010000004.1"/>
</dbReference>
<dbReference type="SMR" id="Q5HDY2"/>
<dbReference type="GeneID" id="66840438"/>
<dbReference type="KEGG" id="sac:SACOL2215"/>
<dbReference type="HOGENOM" id="CLU_103849_1_1_9"/>
<dbReference type="Proteomes" id="UP000000530">
    <property type="component" value="Chromosome"/>
</dbReference>
<dbReference type="GO" id="GO:0005829">
    <property type="term" value="C:cytosol"/>
    <property type="evidence" value="ECO:0007669"/>
    <property type="project" value="TreeGrafter"/>
</dbReference>
<dbReference type="GO" id="GO:0015935">
    <property type="term" value="C:small ribosomal subunit"/>
    <property type="evidence" value="ECO:0007669"/>
    <property type="project" value="TreeGrafter"/>
</dbReference>
<dbReference type="GO" id="GO:0019843">
    <property type="term" value="F:rRNA binding"/>
    <property type="evidence" value="ECO:0007669"/>
    <property type="project" value="UniProtKB-UniRule"/>
</dbReference>
<dbReference type="GO" id="GO:0003735">
    <property type="term" value="F:structural constituent of ribosome"/>
    <property type="evidence" value="ECO:0007669"/>
    <property type="project" value="InterPro"/>
</dbReference>
<dbReference type="GO" id="GO:0000049">
    <property type="term" value="F:tRNA binding"/>
    <property type="evidence" value="ECO:0007669"/>
    <property type="project" value="UniProtKB-UniRule"/>
</dbReference>
<dbReference type="GO" id="GO:0006412">
    <property type="term" value="P:translation"/>
    <property type="evidence" value="ECO:0007669"/>
    <property type="project" value="UniProtKB-UniRule"/>
</dbReference>
<dbReference type="FunFam" id="1.10.8.50:FF:000001">
    <property type="entry name" value="30S ribosomal protein S13"/>
    <property type="match status" value="1"/>
</dbReference>
<dbReference type="FunFam" id="4.10.910.10:FF:000001">
    <property type="entry name" value="30S ribosomal protein S13"/>
    <property type="match status" value="1"/>
</dbReference>
<dbReference type="Gene3D" id="1.10.8.50">
    <property type="match status" value="1"/>
</dbReference>
<dbReference type="Gene3D" id="4.10.910.10">
    <property type="entry name" value="30s ribosomal protein s13, domain 2"/>
    <property type="match status" value="1"/>
</dbReference>
<dbReference type="HAMAP" id="MF_01315">
    <property type="entry name" value="Ribosomal_uS13"/>
    <property type="match status" value="1"/>
</dbReference>
<dbReference type="InterPro" id="IPR027437">
    <property type="entry name" value="Rbsml_uS13_C"/>
</dbReference>
<dbReference type="InterPro" id="IPR001892">
    <property type="entry name" value="Ribosomal_uS13"/>
</dbReference>
<dbReference type="InterPro" id="IPR010979">
    <property type="entry name" value="Ribosomal_uS13-like_H2TH"/>
</dbReference>
<dbReference type="InterPro" id="IPR019980">
    <property type="entry name" value="Ribosomal_uS13_bac-type"/>
</dbReference>
<dbReference type="InterPro" id="IPR018269">
    <property type="entry name" value="Ribosomal_uS13_CS"/>
</dbReference>
<dbReference type="NCBIfam" id="TIGR03631">
    <property type="entry name" value="uS13_bact"/>
    <property type="match status" value="1"/>
</dbReference>
<dbReference type="PANTHER" id="PTHR10871">
    <property type="entry name" value="30S RIBOSOMAL PROTEIN S13/40S RIBOSOMAL PROTEIN S18"/>
    <property type="match status" value="1"/>
</dbReference>
<dbReference type="PANTHER" id="PTHR10871:SF1">
    <property type="entry name" value="SMALL RIBOSOMAL SUBUNIT PROTEIN US13M"/>
    <property type="match status" value="1"/>
</dbReference>
<dbReference type="Pfam" id="PF00416">
    <property type="entry name" value="Ribosomal_S13"/>
    <property type="match status" value="1"/>
</dbReference>
<dbReference type="PIRSF" id="PIRSF002134">
    <property type="entry name" value="Ribosomal_S13"/>
    <property type="match status" value="1"/>
</dbReference>
<dbReference type="SUPFAM" id="SSF46946">
    <property type="entry name" value="S13-like H2TH domain"/>
    <property type="match status" value="1"/>
</dbReference>
<dbReference type="PROSITE" id="PS00646">
    <property type="entry name" value="RIBOSOMAL_S13_1"/>
    <property type="match status" value="1"/>
</dbReference>
<dbReference type="PROSITE" id="PS50159">
    <property type="entry name" value="RIBOSOMAL_S13_2"/>
    <property type="match status" value="1"/>
</dbReference>
<comment type="function">
    <text evidence="1">Located at the top of the head of the 30S subunit, it contacts several helices of the 16S rRNA. In the 70S ribosome it contacts the 23S rRNA (bridge B1a) and protein L5 of the 50S subunit (bridge B1b), connecting the 2 subunits; these bridges are implicated in subunit movement. Contacts the tRNAs in the A and P-sites.</text>
</comment>
<comment type="subunit">
    <text evidence="1">Part of the 30S ribosomal subunit. Forms a loose heterodimer with protein S19. Forms two bridges to the 50S subunit in the 70S ribosome.</text>
</comment>
<comment type="similarity">
    <text evidence="1">Belongs to the universal ribosomal protein uS13 family.</text>
</comment>
<accession>Q5HDY2</accession>
<feature type="chain" id="PRO_0000132134" description="Small ribosomal subunit protein uS13">
    <location>
        <begin position="1"/>
        <end position="121"/>
    </location>
</feature>
<feature type="region of interest" description="Disordered" evidence="2">
    <location>
        <begin position="91"/>
        <end position="121"/>
    </location>
</feature>
<name>RS13_STAAC</name>